<feature type="chain" id="PRO_0000309336" description="Pleckstrin homology domain-containing family M member 1">
    <location>
        <begin position="1"/>
        <end position="1074"/>
    </location>
</feature>
<feature type="domain" description="RUN" evidence="3">
    <location>
        <begin position="40"/>
        <end position="182"/>
    </location>
</feature>
<feature type="domain" description="PH 1" evidence="2">
    <location>
        <begin position="551"/>
        <end position="642"/>
    </location>
</feature>
<feature type="domain" description="PH 2" evidence="2">
    <location>
        <begin position="701"/>
        <end position="795"/>
    </location>
</feature>
<feature type="zinc finger region" description="Phorbol-ester/DAG-type" evidence="4">
    <location>
        <begin position="1004"/>
        <end position="1058"/>
    </location>
</feature>
<feature type="region of interest" description="Disordered" evidence="5">
    <location>
        <begin position="214"/>
        <end position="244"/>
    </location>
</feature>
<feature type="region of interest" description="Disordered" evidence="5">
    <location>
        <begin position="272"/>
        <end position="336"/>
    </location>
</feature>
<feature type="region of interest" description="Disordered" evidence="5">
    <location>
        <begin position="382"/>
        <end position="454"/>
    </location>
</feature>
<feature type="region of interest" description="Disordered" evidence="5">
    <location>
        <begin position="506"/>
        <end position="526"/>
    </location>
</feature>
<feature type="region of interest" description="Disordered" evidence="5">
    <location>
        <begin position="661"/>
        <end position="680"/>
    </location>
</feature>
<feature type="region of interest" description="Interaction with RAB7A" evidence="1">
    <location>
        <begin position="672"/>
        <end position="1074"/>
    </location>
</feature>
<feature type="short sequence motif" description="LIR" evidence="1">
    <location>
        <begin position="649"/>
        <end position="655"/>
    </location>
</feature>
<feature type="compositionally biased region" description="Polar residues" evidence="5">
    <location>
        <begin position="313"/>
        <end position="329"/>
    </location>
</feature>
<feature type="compositionally biased region" description="Polar residues" evidence="5">
    <location>
        <begin position="393"/>
        <end position="404"/>
    </location>
</feature>
<feature type="compositionally biased region" description="Pro residues" evidence="5">
    <location>
        <begin position="511"/>
        <end position="525"/>
    </location>
</feature>
<feature type="modified residue" description="Phosphoserine" evidence="11">
    <location>
        <position position="218"/>
    </location>
</feature>
<feature type="modified residue" description="Phosphoserine" evidence="1">
    <location>
        <position position="433"/>
    </location>
</feature>
<feature type="modified residue" description="Phosphoserine" evidence="11">
    <location>
        <position position="436"/>
    </location>
</feature>
<feature type="modified residue" description="Phosphoserine" evidence="11">
    <location>
        <position position="491"/>
    </location>
</feature>
<feature type="mutagenesis site" description="No change in osteoclast formation and bone resorption." evidence="8">
    <original>R</original>
    <variation>C</variation>
    <location>
        <position position="714"/>
    </location>
</feature>
<feature type="mutagenesis site" description="Decreases interaction with RAB7A." evidence="8">
    <original>YL</original>
    <variation>AA</variation>
    <location>
        <begin position="949"/>
        <end position="950"/>
    </location>
</feature>
<feature type="sequence conflict" description="In Ref. 3; AAH38943." evidence="9" ref="3">
    <original>DSH</original>
    <variation>TRP</variation>
    <location>
        <begin position="742"/>
        <end position="744"/>
    </location>
</feature>
<feature type="sequence conflict" description="In Ref. 1; BAE32773." evidence="9" ref="1">
    <original>T</original>
    <variation>S</variation>
    <location>
        <position position="768"/>
    </location>
</feature>
<protein>
    <recommendedName>
        <fullName evidence="9">Pleckstrin homology domain-containing family M member 1</fullName>
        <shortName>PH domain-containing family M member 1</shortName>
    </recommendedName>
</protein>
<sequence length="1074" mass="118535">MLSVENGLDPRAAIQVIKKKLVGSVKALQKQHVSLDTVVTSEDGDANTMCSALEAVFIHGLHAKHIRAEAGGKRKKHTHQKALPQPVFWPLLKAITHRHIVSDLEHLVFINTDVGRCRAWLRLALNDGLMECYLKLLLQEPARLCEYYQPTALLRDAEEAEFLLSFLQGLTSLSFELSYKSAILNEWTLTPLSLSGLCPLSELDPLTTSGAELQRKESLDSISHSSGSEDIEVQHSGHKIRRNRKLTASSLSLDTASSSQLSCSLNSDSCLLQENGPKSPDHSEEPMSYDSDLGMANTDDPDRSLQEVLSEFSKAQVNSAPSSGPNQEPDTPMFQTPLSLHSLATSTHLHFEGSEELFPAHKSSGTSSGGHKHQLLPQETPDEKQLGTAQAGPAQSTSDQQPSSPVGGAAGQGSGPWKALEYGRVGPKLVVSSPTSPKGKSWISEDDFCRPPQEPALKSAAGLCTSPVQDTPESRAALHGPFSQGPRKSCSLGALDKACVPSQACGNAQPAPAPAPAPAPAPAPAPGVTQDHKNFCVVHRRQMGLSNPFRGLMKLGTVARRGAMGIWKEFFCELSPLEFRLYLSDEERTCVESCSLLRCEAVGPAHSDGRFELVFSGKKLALRASSQDEAEDWLDRVREALQKVRPQQEDEWVNIQYPDQAEDAPEAPPDSLPPYSTLLPEPAGAQGMQLDWTSAQVPEPDAIKESLLYLYADRTWVPYIFSLSLESLKCFRVRNNEKMLSDSHGVETIRDILPDTSLGGPAFFKIITAKAVLKLQAKNTEEATHWRDLVRKVLASYLESAEEAVTLGGSLDEKCQEVLKFATRENGFLLQYLVAIPTEKGLDSQGCFCAGCSRQIGFSFVRPKLCAFSGLYYCDFCHQDDASVIPARIIHNWDLTKRPVCRQALKFLAQIRAQPLINLQLVNASLYEHVERMHLIGRSREQLKLLGDYLGLCRSGALKELCKRLSHRNYLLESPHRFSVADLQQIAEGVYEGFLKALIEFASQHVYHCDLCTQRGFICQICHHQDIIFPFEFDTTVRCAECRTVFHQSCQAVVRKGCPRCARRRKYQEQNVVS</sequence>
<name>PKHM1_MOUSE</name>
<keyword id="KW-0072">Autophagy</keyword>
<keyword id="KW-0968">Cytoplasmic vesicle</keyword>
<keyword id="KW-0967">Endosome</keyword>
<keyword id="KW-0458">Lysosome</keyword>
<keyword id="KW-0472">Membrane</keyword>
<keyword id="KW-0479">Metal-binding</keyword>
<keyword id="KW-0597">Phosphoprotein</keyword>
<keyword id="KW-0653">Protein transport</keyword>
<keyword id="KW-1185">Reference proteome</keyword>
<keyword id="KW-0677">Repeat</keyword>
<keyword id="KW-0813">Transport</keyword>
<keyword id="KW-0862">Zinc</keyword>
<keyword id="KW-0863">Zinc-finger</keyword>
<accession>Q7TSI1</accession>
<accession>Q3U3L2</accession>
<accession>Q8CHU5</accession>
<evidence type="ECO:0000250" key="1">
    <source>
        <dbReference type="UniProtKB" id="Q9Y4G2"/>
    </source>
</evidence>
<evidence type="ECO:0000255" key="2">
    <source>
        <dbReference type="PROSITE-ProRule" id="PRU00145"/>
    </source>
</evidence>
<evidence type="ECO:0000255" key="3">
    <source>
        <dbReference type="PROSITE-ProRule" id="PRU00178"/>
    </source>
</evidence>
<evidence type="ECO:0000255" key="4">
    <source>
        <dbReference type="PROSITE-ProRule" id="PRU00226"/>
    </source>
</evidence>
<evidence type="ECO:0000256" key="5">
    <source>
        <dbReference type="SAM" id="MobiDB-lite"/>
    </source>
</evidence>
<evidence type="ECO:0000269" key="6">
    <source>
    </source>
</evidence>
<evidence type="ECO:0000269" key="7">
    <source>
    </source>
</evidence>
<evidence type="ECO:0000269" key="8">
    <source>
    </source>
</evidence>
<evidence type="ECO:0000305" key="9"/>
<evidence type="ECO:0000312" key="10">
    <source>
        <dbReference type="MGI" id="MGI:2443207"/>
    </source>
</evidence>
<evidence type="ECO:0007744" key="11">
    <source>
    </source>
</evidence>
<reference key="1">
    <citation type="journal article" date="2005" name="Science">
        <title>The transcriptional landscape of the mammalian genome.</title>
        <authorList>
            <person name="Carninci P."/>
            <person name="Kasukawa T."/>
            <person name="Katayama S."/>
            <person name="Gough J."/>
            <person name="Frith M.C."/>
            <person name="Maeda N."/>
            <person name="Oyama R."/>
            <person name="Ravasi T."/>
            <person name="Lenhard B."/>
            <person name="Wells C."/>
            <person name="Kodzius R."/>
            <person name="Shimokawa K."/>
            <person name="Bajic V.B."/>
            <person name="Brenner S.E."/>
            <person name="Batalov S."/>
            <person name="Forrest A.R."/>
            <person name="Zavolan M."/>
            <person name="Davis M.J."/>
            <person name="Wilming L.G."/>
            <person name="Aidinis V."/>
            <person name="Allen J.E."/>
            <person name="Ambesi-Impiombato A."/>
            <person name="Apweiler R."/>
            <person name="Aturaliya R.N."/>
            <person name="Bailey T.L."/>
            <person name="Bansal M."/>
            <person name="Baxter L."/>
            <person name="Beisel K.W."/>
            <person name="Bersano T."/>
            <person name="Bono H."/>
            <person name="Chalk A.M."/>
            <person name="Chiu K.P."/>
            <person name="Choudhary V."/>
            <person name="Christoffels A."/>
            <person name="Clutterbuck D.R."/>
            <person name="Crowe M.L."/>
            <person name="Dalla E."/>
            <person name="Dalrymple B.P."/>
            <person name="de Bono B."/>
            <person name="Della Gatta G."/>
            <person name="di Bernardo D."/>
            <person name="Down T."/>
            <person name="Engstrom P."/>
            <person name="Fagiolini M."/>
            <person name="Faulkner G."/>
            <person name="Fletcher C.F."/>
            <person name="Fukushima T."/>
            <person name="Furuno M."/>
            <person name="Futaki S."/>
            <person name="Gariboldi M."/>
            <person name="Georgii-Hemming P."/>
            <person name="Gingeras T.R."/>
            <person name="Gojobori T."/>
            <person name="Green R.E."/>
            <person name="Gustincich S."/>
            <person name="Harbers M."/>
            <person name="Hayashi Y."/>
            <person name="Hensch T.K."/>
            <person name="Hirokawa N."/>
            <person name="Hill D."/>
            <person name="Huminiecki L."/>
            <person name="Iacono M."/>
            <person name="Ikeo K."/>
            <person name="Iwama A."/>
            <person name="Ishikawa T."/>
            <person name="Jakt M."/>
            <person name="Kanapin A."/>
            <person name="Katoh M."/>
            <person name="Kawasawa Y."/>
            <person name="Kelso J."/>
            <person name="Kitamura H."/>
            <person name="Kitano H."/>
            <person name="Kollias G."/>
            <person name="Krishnan S.P."/>
            <person name="Kruger A."/>
            <person name="Kummerfeld S.K."/>
            <person name="Kurochkin I.V."/>
            <person name="Lareau L.F."/>
            <person name="Lazarevic D."/>
            <person name="Lipovich L."/>
            <person name="Liu J."/>
            <person name="Liuni S."/>
            <person name="McWilliam S."/>
            <person name="Madan Babu M."/>
            <person name="Madera M."/>
            <person name="Marchionni L."/>
            <person name="Matsuda H."/>
            <person name="Matsuzawa S."/>
            <person name="Miki H."/>
            <person name="Mignone F."/>
            <person name="Miyake S."/>
            <person name="Morris K."/>
            <person name="Mottagui-Tabar S."/>
            <person name="Mulder N."/>
            <person name="Nakano N."/>
            <person name="Nakauchi H."/>
            <person name="Ng P."/>
            <person name="Nilsson R."/>
            <person name="Nishiguchi S."/>
            <person name="Nishikawa S."/>
            <person name="Nori F."/>
            <person name="Ohara O."/>
            <person name="Okazaki Y."/>
            <person name="Orlando V."/>
            <person name="Pang K.C."/>
            <person name="Pavan W.J."/>
            <person name="Pavesi G."/>
            <person name="Pesole G."/>
            <person name="Petrovsky N."/>
            <person name="Piazza S."/>
            <person name="Reed J."/>
            <person name="Reid J.F."/>
            <person name="Ring B.Z."/>
            <person name="Ringwald M."/>
            <person name="Rost B."/>
            <person name="Ruan Y."/>
            <person name="Salzberg S.L."/>
            <person name="Sandelin A."/>
            <person name="Schneider C."/>
            <person name="Schoenbach C."/>
            <person name="Sekiguchi K."/>
            <person name="Semple C.A."/>
            <person name="Seno S."/>
            <person name="Sessa L."/>
            <person name="Sheng Y."/>
            <person name="Shibata Y."/>
            <person name="Shimada H."/>
            <person name="Shimada K."/>
            <person name="Silva D."/>
            <person name="Sinclair B."/>
            <person name="Sperling S."/>
            <person name="Stupka E."/>
            <person name="Sugiura K."/>
            <person name="Sultana R."/>
            <person name="Takenaka Y."/>
            <person name="Taki K."/>
            <person name="Tammoja K."/>
            <person name="Tan S.L."/>
            <person name="Tang S."/>
            <person name="Taylor M.S."/>
            <person name="Tegner J."/>
            <person name="Teichmann S.A."/>
            <person name="Ueda H.R."/>
            <person name="van Nimwegen E."/>
            <person name="Verardo R."/>
            <person name="Wei C.L."/>
            <person name="Yagi K."/>
            <person name="Yamanishi H."/>
            <person name="Zabarovsky E."/>
            <person name="Zhu S."/>
            <person name="Zimmer A."/>
            <person name="Hide W."/>
            <person name="Bult C."/>
            <person name="Grimmond S.M."/>
            <person name="Teasdale R.D."/>
            <person name="Liu E.T."/>
            <person name="Brusic V."/>
            <person name="Quackenbush J."/>
            <person name="Wahlestedt C."/>
            <person name="Mattick J.S."/>
            <person name="Hume D.A."/>
            <person name="Kai C."/>
            <person name="Sasaki D."/>
            <person name="Tomaru Y."/>
            <person name="Fukuda S."/>
            <person name="Kanamori-Katayama M."/>
            <person name="Suzuki M."/>
            <person name="Aoki J."/>
            <person name="Arakawa T."/>
            <person name="Iida J."/>
            <person name="Imamura K."/>
            <person name="Itoh M."/>
            <person name="Kato T."/>
            <person name="Kawaji H."/>
            <person name="Kawagashira N."/>
            <person name="Kawashima T."/>
            <person name="Kojima M."/>
            <person name="Kondo S."/>
            <person name="Konno H."/>
            <person name="Nakano K."/>
            <person name="Ninomiya N."/>
            <person name="Nishio T."/>
            <person name="Okada M."/>
            <person name="Plessy C."/>
            <person name="Shibata K."/>
            <person name="Shiraki T."/>
            <person name="Suzuki S."/>
            <person name="Tagami M."/>
            <person name="Waki K."/>
            <person name="Watahiki A."/>
            <person name="Okamura-Oho Y."/>
            <person name="Suzuki H."/>
            <person name="Kawai J."/>
            <person name="Hayashizaki Y."/>
        </authorList>
    </citation>
    <scope>NUCLEOTIDE SEQUENCE [LARGE SCALE MRNA]</scope>
    <source>
        <strain>NOD</strain>
    </source>
</reference>
<reference key="2">
    <citation type="journal article" date="2009" name="PLoS Biol.">
        <title>Lineage-specific biology revealed by a finished genome assembly of the mouse.</title>
        <authorList>
            <person name="Church D.M."/>
            <person name="Goodstadt L."/>
            <person name="Hillier L.W."/>
            <person name="Zody M.C."/>
            <person name="Goldstein S."/>
            <person name="She X."/>
            <person name="Bult C.J."/>
            <person name="Agarwala R."/>
            <person name="Cherry J.L."/>
            <person name="DiCuccio M."/>
            <person name="Hlavina W."/>
            <person name="Kapustin Y."/>
            <person name="Meric P."/>
            <person name="Maglott D."/>
            <person name="Birtle Z."/>
            <person name="Marques A.C."/>
            <person name="Graves T."/>
            <person name="Zhou S."/>
            <person name="Teague B."/>
            <person name="Potamousis K."/>
            <person name="Churas C."/>
            <person name="Place M."/>
            <person name="Herschleb J."/>
            <person name="Runnheim R."/>
            <person name="Forrest D."/>
            <person name="Amos-Landgraf J."/>
            <person name="Schwartz D.C."/>
            <person name="Cheng Z."/>
            <person name="Lindblad-Toh K."/>
            <person name="Eichler E.E."/>
            <person name="Ponting C.P."/>
        </authorList>
    </citation>
    <scope>NUCLEOTIDE SEQUENCE [LARGE SCALE GENOMIC DNA]</scope>
    <source>
        <strain>C57BL/6J</strain>
    </source>
</reference>
<reference key="3">
    <citation type="journal article" date="2004" name="Genome Res.">
        <title>The status, quality, and expansion of the NIH full-length cDNA project: the Mammalian Gene Collection (MGC).</title>
        <authorList>
            <consortium name="The MGC Project Team"/>
        </authorList>
    </citation>
    <scope>NUCLEOTIDE SEQUENCE [LARGE SCALE MRNA]</scope>
    <source>
        <strain>C57BL/6J</strain>
        <strain>FVB/N</strain>
        <tissue>Brain</tissue>
        <tissue>Kidney</tissue>
    </source>
</reference>
<reference key="4">
    <citation type="journal article" date="2010" name="Cell">
        <title>A tissue-specific atlas of mouse protein phosphorylation and expression.</title>
        <authorList>
            <person name="Huttlin E.L."/>
            <person name="Jedrychowski M.P."/>
            <person name="Elias J.E."/>
            <person name="Goswami T."/>
            <person name="Rad R."/>
            <person name="Beausoleil S.A."/>
            <person name="Villen J."/>
            <person name="Haas W."/>
            <person name="Sowa M.E."/>
            <person name="Gygi S.P."/>
        </authorList>
    </citation>
    <scope>PHOSPHORYLATION [LARGE SCALE ANALYSIS] AT SER-218; SER-436 AND SER-491</scope>
    <scope>IDENTIFICATION BY MASS SPECTROMETRY [LARGE SCALE ANALYSIS]</scope>
    <source>
        <tissue>Brown adipose tissue</tissue>
        <tissue>Spleen</tissue>
    </source>
</reference>
<reference key="5">
    <citation type="journal article" date="2011" name="PLoS ONE">
        <title>LIS1 regulates osteoclast formation and function through its interactions with dynein/dynactin and Plekhm1.</title>
        <authorList>
            <person name="Ye S."/>
            <person name="Fowler T.W."/>
            <person name="Pavlos N.J."/>
            <person name="Ng P.Y."/>
            <person name="Liang K."/>
            <person name="Feng Y."/>
            <person name="Zheng M."/>
            <person name="Kurten R."/>
            <person name="Manolagas S.C."/>
            <person name="Zhao H."/>
        </authorList>
    </citation>
    <scope>INTERACTION WITH PAFAH1B1</scope>
</reference>
<reference key="6">
    <citation type="journal article" date="2015" name="Mol. Cell">
        <title>PLEKHM1 regulates autophagosome-lysosome fusion through HOPS complex and LC3/GABARAP proteins.</title>
        <authorList>
            <person name="McEwan D.G."/>
            <person name="Popovic D."/>
            <person name="Gubas A."/>
            <person name="Terawaki S."/>
            <person name="Suzuki H."/>
            <person name="Stadel D."/>
            <person name="Coxon F.P."/>
            <person name="Miranda de Stegmann D."/>
            <person name="Bhogaraju S."/>
            <person name="Maddi K."/>
            <person name="Kirchof A."/>
            <person name="Gatti E."/>
            <person name="Helfrich M.H."/>
            <person name="Wakatsuki S."/>
            <person name="Behrends C."/>
            <person name="Pierre P."/>
            <person name="Dikic I."/>
        </authorList>
    </citation>
    <scope>FUNCTION</scope>
    <scope>SUBCELLULAR LOCATION</scope>
</reference>
<reference key="7">
    <citation type="journal article" date="2016" name="JCI Insight">
        <title>PLEKHM1/DEF8/RAB7 complex regulates lysosome positioning and bone homeostasis.</title>
        <authorList>
            <person name="Fujiwara T."/>
            <person name="Ye S."/>
            <person name="Castro-Gomes T."/>
            <person name="Winchell C.G."/>
            <person name="Andrews N.W."/>
            <person name="Voth D.E."/>
            <person name="Varughese K.I."/>
            <person name="Mackintosh S.G."/>
            <person name="Feng Y."/>
            <person name="Pavlos N."/>
            <person name="Nakamura T."/>
            <person name="Manolagas S.C."/>
            <person name="Zhao H."/>
        </authorList>
    </citation>
    <scope>FUNCTION</scope>
    <scope>INTERACTION WITH DEF8; FAM98A; NDEL1 AND RAB7A</scope>
    <scope>DISRUPTION PHENOTYPE</scope>
    <scope>MUTAGENESIS OF ARG-714 AND 949-TYR-LEU-950</scope>
</reference>
<organism>
    <name type="scientific">Mus musculus</name>
    <name type="common">Mouse</name>
    <dbReference type="NCBI Taxonomy" id="10090"/>
    <lineage>
        <taxon>Eukaryota</taxon>
        <taxon>Metazoa</taxon>
        <taxon>Chordata</taxon>
        <taxon>Craniata</taxon>
        <taxon>Vertebrata</taxon>
        <taxon>Euteleostomi</taxon>
        <taxon>Mammalia</taxon>
        <taxon>Eutheria</taxon>
        <taxon>Euarchontoglires</taxon>
        <taxon>Glires</taxon>
        <taxon>Rodentia</taxon>
        <taxon>Myomorpha</taxon>
        <taxon>Muroidea</taxon>
        <taxon>Muridae</taxon>
        <taxon>Murinae</taxon>
        <taxon>Mus</taxon>
        <taxon>Mus</taxon>
    </lineage>
</organism>
<gene>
    <name evidence="10" type="primary">Plekhm1</name>
</gene>
<comment type="function">
    <text evidence="1 7 8">Acts as a multivalent adapter protein that regulates Rab7-dependent and HOPS complex-dependent fusion events in the endolysosomal system and couples autophagic and the endocytic trafficking pathways. Acts as a dual effector of RAB7A and ARL8B that simultaneously binds these GTPases, bringing about clustering and fusion of late endosomes and lysosomes. Required for late stages of endolysosomal maturation, facilitating both endocytosis-mediated degradation of growth factor receptors and autophagosome clearance. Interaction with Arl8b is a crucial factor in the terminal maturation of autophagosomes and to mediate autophagosome-lysosome fusion (PubMed:25498145). Positively regulates lysosome peripheral distribution and ruffled border formation in osteoclasts (PubMed:27777970). May be involved in negative regulation of endocytic transport from early endosome to late endosome/lysosome implicating its association with Rab7. May have a role in sialyl-lex-mediated transduction of apoptotic signals (By similarity). Involved in bone resorption (PubMed:27777970).</text>
</comment>
<comment type="subunit">
    <text evidence="1 6 8">Interacts (via N- and C-terminus) with RAB7A (GTP-bound form). Simultaneously interacts with RAB7A and ARL8B; bringing about clustering and fusion of late endosomes and lysosomes. Interacts (via RUN domain) with ARL8B (GTP-bound form); the interaction is required for PLEKHM1 localization to lysosomes and for ARL8B function in delivery and degradation of endocytic and autophagic cargo in lysosomes. PLEKHM1 and PLEKHM2 compete for interaction with ARL8B. Interacts with ARL8A; the interaction is weaker than with ARL8B. Interacts with VPS41, VPS11, VPS18, VPS33A and VPS39; indicative for an association with the HOPS complex; the interactions with, at least, VPS41, VPS11, VPS18 and VPS33A require ARL8B (By similarity). Interacts with GABARAP, GABARAPL, GABARAPL2, MAP1LC3A, MAP1LC3B and MAP1LC3C (By similarity). Interacts with PAFAH1B (PubMed:22073305). Interacts (via N- and C-terminus) with NDEL1 (PubMed:27777970). Interacts (via C-terminus) with MAP3K7 (PubMed:27777970). Interacts (via N- and C-terminus) with FAM98A (PubMed:27777970). Interacts (via C-terminus) with DEF8; this interaction is weak but increased in a RAB7A-dependent manner (PubMed:27777970). May interact with sialyl-lex-positive protein (By similarity).</text>
</comment>
<comment type="subcellular location">
    <subcellularLocation>
        <location evidence="1">Autolysosome membrane</location>
    </subcellularLocation>
    <subcellularLocation>
        <location evidence="1">Endosome membrane</location>
    </subcellularLocation>
    <subcellularLocation>
        <location evidence="1">Late endosome membrane</location>
    </subcellularLocation>
    <subcellularLocation>
        <location evidence="1">Lysosome membrane</location>
    </subcellularLocation>
    <text evidence="1">In case of infection colocalizes with Salmonella typhimurium sifA in proximity of Salmonella-containing vacuole (SCV).</text>
</comment>
<comment type="domain">
    <text evidence="1">The LIR (LC3-interacting region) motif mediates the interaction with ATG8 family proteins GABARAP, GABARAPL, GABARAPL2, and LC3A/B/C.</text>
</comment>
<comment type="disruption phenotype">
    <text evidence="8">Osteoclast-specific conditional knockout mice show normal tooth eruption, developed normally and are fertile, but trabecular bone mass in long bones and vertebrae is increased (PubMed:27777970). Osteoclast differentiation and number are normal, but bone resorption is decreased (PubMed:27777970). Show mislocalization of osteoclast lysosomes at the perinuclear area, instead at the cell periphery, and decreased ruffled border formation (PubMed:27777970).</text>
</comment>
<comment type="miscellaneous">
    <text>Sialyl-lex is a carcinoma associated antigen.</text>
</comment>
<proteinExistence type="evidence at protein level"/>
<dbReference type="EMBL" id="AK154703">
    <property type="protein sequence ID" value="BAE32773.1"/>
    <property type="molecule type" value="mRNA"/>
</dbReference>
<dbReference type="EMBL" id="AL772325">
    <property type="status" value="NOT_ANNOTATED_CDS"/>
    <property type="molecule type" value="Genomic_DNA"/>
</dbReference>
<dbReference type="EMBL" id="AL929552">
    <property type="status" value="NOT_ANNOTATED_CDS"/>
    <property type="molecule type" value="Genomic_DNA"/>
</dbReference>
<dbReference type="EMBL" id="BC038943">
    <property type="protein sequence ID" value="AAH38943.1"/>
    <property type="molecule type" value="mRNA"/>
</dbReference>
<dbReference type="EMBL" id="BC053079">
    <property type="protein sequence ID" value="AAH53079.1"/>
    <property type="molecule type" value="mRNA"/>
</dbReference>
<dbReference type="CCDS" id="CCDS25518.1"/>
<dbReference type="RefSeq" id="NP_898855.1">
    <property type="nucleotide sequence ID" value="NM_183034.2"/>
</dbReference>
<dbReference type="SMR" id="Q7TSI1"/>
<dbReference type="BioGRID" id="237251">
    <property type="interactions" value="1"/>
</dbReference>
<dbReference type="FunCoup" id="Q7TSI1">
    <property type="interactions" value="3214"/>
</dbReference>
<dbReference type="IntAct" id="Q7TSI1">
    <property type="interactions" value="1"/>
</dbReference>
<dbReference type="STRING" id="10090.ENSMUSP00000047327"/>
<dbReference type="iPTMnet" id="Q7TSI1"/>
<dbReference type="PhosphoSitePlus" id="Q7TSI1"/>
<dbReference type="jPOST" id="Q7TSI1"/>
<dbReference type="PaxDb" id="10090-ENSMUSP00000047327"/>
<dbReference type="PeptideAtlas" id="Q7TSI1"/>
<dbReference type="ProteomicsDB" id="289911"/>
<dbReference type="Pumba" id="Q7TSI1"/>
<dbReference type="Antibodypedia" id="30012">
    <property type="antibodies" value="143 antibodies from 27 providers"/>
</dbReference>
<dbReference type="Ensembl" id="ENSMUST00000041272.10">
    <property type="protein sequence ID" value="ENSMUSP00000047327.9"/>
    <property type="gene ID" value="ENSMUSG00000034247.10"/>
</dbReference>
<dbReference type="GeneID" id="353047"/>
<dbReference type="KEGG" id="mmu:353047"/>
<dbReference type="UCSC" id="uc007lug.1">
    <property type="organism name" value="mouse"/>
</dbReference>
<dbReference type="AGR" id="MGI:2443207"/>
<dbReference type="CTD" id="9842"/>
<dbReference type="MGI" id="MGI:2443207">
    <property type="gene designation" value="Plekhm1"/>
</dbReference>
<dbReference type="VEuPathDB" id="HostDB:ENSMUSG00000034247"/>
<dbReference type="eggNOG" id="KOG1829">
    <property type="taxonomic scope" value="Eukaryota"/>
</dbReference>
<dbReference type="GeneTree" id="ENSGT00940000155111"/>
<dbReference type="HOGENOM" id="CLU_011318_0_0_1"/>
<dbReference type="InParanoid" id="Q7TSI1"/>
<dbReference type="OMA" id="IWRDYYC"/>
<dbReference type="OrthoDB" id="62364at2759"/>
<dbReference type="PhylomeDB" id="Q7TSI1"/>
<dbReference type="TreeFam" id="TF317067"/>
<dbReference type="BioGRID-ORCS" id="353047">
    <property type="hits" value="3 hits in 76 CRISPR screens"/>
</dbReference>
<dbReference type="ChiTaRS" id="Plekhm1">
    <property type="organism name" value="mouse"/>
</dbReference>
<dbReference type="PRO" id="PR:Q7TSI1"/>
<dbReference type="Proteomes" id="UP000000589">
    <property type="component" value="Chromosome 11"/>
</dbReference>
<dbReference type="RNAct" id="Q7TSI1">
    <property type="molecule type" value="protein"/>
</dbReference>
<dbReference type="Bgee" id="ENSMUSG00000034247">
    <property type="expression patterns" value="Expressed in granulocyte and 191 other cell types or tissues"/>
</dbReference>
<dbReference type="ExpressionAtlas" id="Q7TSI1">
    <property type="expression patterns" value="baseline and differential"/>
</dbReference>
<dbReference type="GO" id="GO:0044754">
    <property type="term" value="C:autolysosome"/>
    <property type="evidence" value="ECO:0000250"/>
    <property type="project" value="UniProtKB"/>
</dbReference>
<dbReference type="GO" id="GO:0120281">
    <property type="term" value="C:autolysosome membrane"/>
    <property type="evidence" value="ECO:0007669"/>
    <property type="project" value="UniProtKB-SubCell"/>
</dbReference>
<dbReference type="GO" id="GO:0031902">
    <property type="term" value="C:late endosome membrane"/>
    <property type="evidence" value="ECO:0007669"/>
    <property type="project" value="UniProtKB-SubCell"/>
</dbReference>
<dbReference type="GO" id="GO:0005764">
    <property type="term" value="C:lysosome"/>
    <property type="evidence" value="ECO:0000250"/>
    <property type="project" value="UniProtKB"/>
</dbReference>
<dbReference type="GO" id="GO:0005730">
    <property type="term" value="C:nucleolus"/>
    <property type="evidence" value="ECO:0007669"/>
    <property type="project" value="Ensembl"/>
</dbReference>
<dbReference type="GO" id="GO:0005654">
    <property type="term" value="C:nucleoplasm"/>
    <property type="evidence" value="ECO:0007669"/>
    <property type="project" value="Ensembl"/>
</dbReference>
<dbReference type="GO" id="GO:0008270">
    <property type="term" value="F:zinc ion binding"/>
    <property type="evidence" value="ECO:0007669"/>
    <property type="project" value="UniProtKB-KW"/>
</dbReference>
<dbReference type="GO" id="GO:0061909">
    <property type="term" value="P:autophagosome-lysosome fusion"/>
    <property type="evidence" value="ECO:0000250"/>
    <property type="project" value="UniProtKB"/>
</dbReference>
<dbReference type="GO" id="GO:1902774">
    <property type="term" value="P:late endosome to lysosome transport"/>
    <property type="evidence" value="ECO:0000250"/>
    <property type="project" value="UniProtKB"/>
</dbReference>
<dbReference type="GO" id="GO:0032418">
    <property type="term" value="P:lysosome localization"/>
    <property type="evidence" value="ECO:0000315"/>
    <property type="project" value="UniProtKB"/>
</dbReference>
<dbReference type="GO" id="GO:0045780">
    <property type="term" value="P:positive regulation of bone resorption"/>
    <property type="evidence" value="ECO:0000315"/>
    <property type="project" value="UniProtKB"/>
</dbReference>
<dbReference type="GO" id="GO:1900029">
    <property type="term" value="P:positive regulation of ruffle assembly"/>
    <property type="evidence" value="ECO:0000315"/>
    <property type="project" value="UniProtKB"/>
</dbReference>
<dbReference type="GO" id="GO:0015031">
    <property type="term" value="P:protein transport"/>
    <property type="evidence" value="ECO:0007669"/>
    <property type="project" value="UniProtKB-KW"/>
</dbReference>
<dbReference type="CDD" id="cd13321">
    <property type="entry name" value="PH_PLEKHM1"/>
    <property type="match status" value="1"/>
</dbReference>
<dbReference type="CDD" id="cd17679">
    <property type="entry name" value="RUN_PLEKHM1"/>
    <property type="match status" value="1"/>
</dbReference>
<dbReference type="FunFam" id="1.20.58.900:FF:000013">
    <property type="entry name" value="pleckstrin homology domain-containing family M member 1 isoform X1"/>
    <property type="match status" value="1"/>
</dbReference>
<dbReference type="FunFam" id="2.30.29.30:FF:000315">
    <property type="entry name" value="pleckstrin homology domain-containing family M member 1 isoform X1"/>
    <property type="match status" value="1"/>
</dbReference>
<dbReference type="Gene3D" id="1.20.58.900">
    <property type="match status" value="1"/>
</dbReference>
<dbReference type="Gene3D" id="2.30.29.30">
    <property type="entry name" value="Pleckstrin-homology domain (PH domain)/Phosphotyrosine-binding domain (PTB)"/>
    <property type="match status" value="1"/>
</dbReference>
<dbReference type="InterPro" id="IPR051366">
    <property type="entry name" value="DEF8"/>
</dbReference>
<dbReference type="InterPro" id="IPR002219">
    <property type="entry name" value="PE/DAG-bd"/>
</dbReference>
<dbReference type="InterPro" id="IPR011993">
    <property type="entry name" value="PH-like_dom_sf"/>
</dbReference>
<dbReference type="InterPro" id="IPR001849">
    <property type="entry name" value="PH_domain"/>
</dbReference>
<dbReference type="InterPro" id="IPR042827">
    <property type="entry name" value="PLEKHM1_PH"/>
</dbReference>
<dbReference type="InterPro" id="IPR025258">
    <property type="entry name" value="RH_dom"/>
</dbReference>
<dbReference type="InterPro" id="IPR004012">
    <property type="entry name" value="Run_dom"/>
</dbReference>
<dbReference type="InterPro" id="IPR037213">
    <property type="entry name" value="Run_dom_sf"/>
</dbReference>
<dbReference type="InterPro" id="IPR047326">
    <property type="entry name" value="RUN_PLEKHM1"/>
</dbReference>
<dbReference type="PANTHER" id="PTHR12326">
    <property type="entry name" value="PLECKSTRIN HOMOLOGY DOMAIN CONTAINING PROTEIN"/>
    <property type="match status" value="1"/>
</dbReference>
<dbReference type="PANTHER" id="PTHR12326:SF5">
    <property type="entry name" value="PLECKSTRIN HOMOLOGY DOMAIN-CONTAINING FAMILY M MEMBER 1"/>
    <property type="match status" value="1"/>
</dbReference>
<dbReference type="Pfam" id="PF13901">
    <property type="entry name" value="RH_dom"/>
    <property type="match status" value="1"/>
</dbReference>
<dbReference type="Pfam" id="PF02759">
    <property type="entry name" value="RUN"/>
    <property type="match status" value="1"/>
</dbReference>
<dbReference type="SMART" id="SM00109">
    <property type="entry name" value="C1"/>
    <property type="match status" value="1"/>
</dbReference>
<dbReference type="SMART" id="SM01175">
    <property type="entry name" value="DUF4206"/>
    <property type="match status" value="1"/>
</dbReference>
<dbReference type="SMART" id="SM00233">
    <property type="entry name" value="PH"/>
    <property type="match status" value="2"/>
</dbReference>
<dbReference type="SMART" id="SM00593">
    <property type="entry name" value="RUN"/>
    <property type="match status" value="1"/>
</dbReference>
<dbReference type="SUPFAM" id="SSF50729">
    <property type="entry name" value="PH domain-like"/>
    <property type="match status" value="2"/>
</dbReference>
<dbReference type="SUPFAM" id="SSF140741">
    <property type="entry name" value="RUN domain-like"/>
    <property type="match status" value="1"/>
</dbReference>
<dbReference type="PROSITE" id="PS50003">
    <property type="entry name" value="PH_DOMAIN"/>
    <property type="match status" value="2"/>
</dbReference>
<dbReference type="PROSITE" id="PS50826">
    <property type="entry name" value="RUN"/>
    <property type="match status" value="1"/>
</dbReference>
<dbReference type="PROSITE" id="PS50081">
    <property type="entry name" value="ZF_DAG_PE_2"/>
    <property type="match status" value="1"/>
</dbReference>